<gene>
    <name type="primary">smtB</name>
    <name type="ordered locus">Rv2358</name>
</gene>
<protein>
    <recommendedName>
        <fullName>HTH-type transcriptional repressor SmtB</fullName>
    </recommendedName>
</protein>
<proteinExistence type="evidence at protein level"/>
<accession>P9WMI5</accession>
<accession>F2GIN4</accession>
<accession>L0TCA4</accession>
<accession>O05840</accession>
<accession>Q7D7A0</accession>
<feature type="chain" id="PRO_0000419166" description="HTH-type transcriptional repressor SmtB">
    <location>
        <begin position="1"/>
        <end position="135"/>
    </location>
</feature>
<feature type="domain" description="HTH arsR-type" evidence="2">
    <location>
        <begin position="40"/>
        <end position="134"/>
    </location>
</feature>
<feature type="DNA-binding region" description="H-T-H motif" evidence="2">
    <location>
        <begin position="74"/>
        <end position="97"/>
    </location>
</feature>
<feature type="region of interest" description="Disordered" evidence="3">
    <location>
        <begin position="1"/>
        <end position="32"/>
    </location>
</feature>
<feature type="compositionally biased region" description="Basic and acidic residues" evidence="3">
    <location>
        <begin position="11"/>
        <end position="31"/>
    </location>
</feature>
<feature type="binding site" evidence="2">
    <location>
        <position position="116"/>
    </location>
    <ligand>
        <name>Zn(2+)</name>
        <dbReference type="ChEBI" id="CHEBI:29105"/>
        <label>1</label>
    </ligand>
</feature>
<feature type="binding site" evidence="2">
    <location>
        <position position="118"/>
    </location>
    <ligand>
        <name>Zn(2+)</name>
        <dbReference type="ChEBI" id="CHEBI:29105"/>
        <label>1</label>
    </ligand>
</feature>
<feature type="binding site" evidence="2">
    <location>
        <position position="129"/>
    </location>
    <ligand>
        <name>Zn(2+)</name>
        <dbReference type="ChEBI" id="CHEBI:29105"/>
        <label>2</label>
    </ligand>
</feature>
<feature type="binding site" evidence="2">
    <location>
        <position position="132"/>
    </location>
    <ligand>
        <name>Zn(2+)</name>
        <dbReference type="ChEBI" id="CHEBI:29105"/>
        <label>2</label>
    </ligand>
</feature>
<name>SMTB_MYCTU</name>
<reference key="1">
    <citation type="journal article" date="1998" name="Nature">
        <title>Deciphering the biology of Mycobacterium tuberculosis from the complete genome sequence.</title>
        <authorList>
            <person name="Cole S.T."/>
            <person name="Brosch R."/>
            <person name="Parkhill J."/>
            <person name="Garnier T."/>
            <person name="Churcher C.M."/>
            <person name="Harris D.E."/>
            <person name="Gordon S.V."/>
            <person name="Eiglmeier K."/>
            <person name="Gas S."/>
            <person name="Barry C.E. III"/>
            <person name="Tekaia F."/>
            <person name="Badcock K."/>
            <person name="Basham D."/>
            <person name="Brown D."/>
            <person name="Chillingworth T."/>
            <person name="Connor R."/>
            <person name="Davies R.M."/>
            <person name="Devlin K."/>
            <person name="Feltwell T."/>
            <person name="Gentles S."/>
            <person name="Hamlin N."/>
            <person name="Holroyd S."/>
            <person name="Hornsby T."/>
            <person name="Jagels K."/>
            <person name="Krogh A."/>
            <person name="McLean J."/>
            <person name="Moule S."/>
            <person name="Murphy L.D."/>
            <person name="Oliver S."/>
            <person name="Osborne J."/>
            <person name="Quail M.A."/>
            <person name="Rajandream M.A."/>
            <person name="Rogers J."/>
            <person name="Rutter S."/>
            <person name="Seeger K."/>
            <person name="Skelton S."/>
            <person name="Squares S."/>
            <person name="Squares R."/>
            <person name="Sulston J.E."/>
            <person name="Taylor K."/>
            <person name="Whitehead S."/>
            <person name="Barrell B.G."/>
        </authorList>
    </citation>
    <scope>NUCLEOTIDE SEQUENCE [LARGE SCALE GENOMIC DNA]</scope>
    <source>
        <strain>ATCC 25618 / H37Rv</strain>
    </source>
</reference>
<reference key="2">
    <citation type="journal article" date="2004" name="Res. Microbiol.">
        <title>The Mycobacterium tuberculosis Rv2358-furB operon is induced by zinc.</title>
        <authorList>
            <person name="Milano A."/>
            <person name="Branzoni M."/>
            <person name="Canneva F."/>
            <person name="Profumo A."/>
            <person name="Riccardi G."/>
        </authorList>
    </citation>
    <scope>INDUCTION</scope>
    <source>
        <strain>ATCC 25618 / H37Rv</strain>
    </source>
</reference>
<reference key="3">
    <citation type="journal article" date="2005" name="J. Bacteriol.">
        <title>Rv2358 and FurB: two transcriptional regulators from Mycobacterium tuberculosis which respond to zinc.</title>
        <authorList>
            <person name="Canneva F."/>
            <person name="Branzoni M."/>
            <person name="Riccardi G."/>
            <person name="Provvedi R."/>
            <person name="Milano A."/>
        </authorList>
    </citation>
    <scope>FUNCTION</scope>
    <scope>DNA-BINDING</scope>
    <scope>ACTIVITY REGULATION</scope>
    <scope>INDUCTION</scope>
</reference>
<reference key="4">
    <citation type="journal article" date="2011" name="Mol. Cell. Proteomics">
        <title>Proteogenomic analysis of Mycobacterium tuberculosis by high resolution mass spectrometry.</title>
        <authorList>
            <person name="Kelkar D.S."/>
            <person name="Kumar D."/>
            <person name="Kumar P."/>
            <person name="Balakrishnan L."/>
            <person name="Muthusamy B."/>
            <person name="Yadav A.K."/>
            <person name="Shrivastava P."/>
            <person name="Marimuthu A."/>
            <person name="Anand S."/>
            <person name="Sundaram H."/>
            <person name="Kingsbury R."/>
            <person name="Harsha H.C."/>
            <person name="Nair B."/>
            <person name="Prasad T.S."/>
            <person name="Chauhan D.S."/>
            <person name="Katoch K."/>
            <person name="Katoch V.M."/>
            <person name="Kumar P."/>
            <person name="Chaerkady R."/>
            <person name="Ramachandran S."/>
            <person name="Dash D."/>
            <person name="Pandey A."/>
        </authorList>
    </citation>
    <scope>IDENTIFICATION BY MASS SPECTROMETRY [LARGE SCALE ANALYSIS]</scope>
    <source>
        <strain>ATCC 25618 / H37Rv</strain>
    </source>
</reference>
<sequence>MVTSPSTPTAAHEDVGADEVGGHQHPADRFAECPTFPAPPPREILDAAGELLRALAAPVRIAIVLQLRESQRCVHELVDALHVPQPLVSQHLKILKAAGVVTGERSGREVLYRLADHHLAHIVLDAVAHAGEDAI</sequence>
<evidence type="ECO:0000250" key="1"/>
<evidence type="ECO:0000255" key="2">
    <source>
        <dbReference type="PROSITE-ProRule" id="PRU00340"/>
    </source>
</evidence>
<evidence type="ECO:0000256" key="3">
    <source>
        <dbReference type="SAM" id="MobiDB-lite"/>
    </source>
</evidence>
<evidence type="ECO:0000269" key="4">
    <source>
    </source>
</evidence>
<evidence type="ECO:0000269" key="5">
    <source>
    </source>
</evidence>
<keyword id="KW-0002">3D-structure</keyword>
<keyword id="KW-0238">DNA-binding</keyword>
<keyword id="KW-0479">Metal-binding</keyword>
<keyword id="KW-1185">Reference proteome</keyword>
<keyword id="KW-0678">Repressor</keyword>
<keyword id="KW-0804">Transcription</keyword>
<keyword id="KW-0805">Transcription regulation</keyword>
<keyword id="KW-0862">Zinc</keyword>
<organism>
    <name type="scientific">Mycobacterium tuberculosis (strain ATCC 25618 / H37Rv)</name>
    <dbReference type="NCBI Taxonomy" id="83332"/>
    <lineage>
        <taxon>Bacteria</taxon>
        <taxon>Bacillati</taxon>
        <taxon>Actinomycetota</taxon>
        <taxon>Actinomycetes</taxon>
        <taxon>Mycobacteriales</taxon>
        <taxon>Mycobacteriaceae</taxon>
        <taxon>Mycobacterium</taxon>
        <taxon>Mycobacterium tuberculosis complex</taxon>
    </lineage>
</organism>
<comment type="function">
    <text evidence="5">Transcriptional regulator involved in zinc homeostasis. Represses the expression of the smtB-zur operon in the absence of zinc. Could act as the metal sensor that controls the expression of zur in response to zinc availability.</text>
</comment>
<comment type="activity regulation">
    <text evidence="5">Binding to DNA is inhibited by zinc ions.</text>
</comment>
<comment type="subunit">
    <text evidence="1">Homodimer.</text>
</comment>
<comment type="induction">
    <text evidence="4 5">Induced by zinc. Negatively autoregulated.</text>
</comment>
<dbReference type="EMBL" id="AL123456">
    <property type="protein sequence ID" value="CCP45146.1"/>
    <property type="molecule type" value="Genomic_DNA"/>
</dbReference>
<dbReference type="PIR" id="E70585">
    <property type="entry name" value="E70585"/>
</dbReference>
<dbReference type="RefSeq" id="NP_216874.1">
    <property type="nucleotide sequence ID" value="NC_000962.3"/>
</dbReference>
<dbReference type="RefSeq" id="WP_003412205.1">
    <property type="nucleotide sequence ID" value="NZ_NVQJ01000029.1"/>
</dbReference>
<dbReference type="PDB" id="8QKF">
    <property type="method" value="X-ray"/>
    <property type="resolution" value="1.88 A"/>
    <property type="chains" value="A/B=37-133"/>
</dbReference>
<dbReference type="PDBsum" id="8QKF"/>
<dbReference type="SMR" id="P9WMI5"/>
<dbReference type="STRING" id="83332.Rv2358"/>
<dbReference type="PaxDb" id="83332-Rv2358"/>
<dbReference type="DNASU" id="888965"/>
<dbReference type="GeneID" id="888965"/>
<dbReference type="KEGG" id="mtu:Rv2358"/>
<dbReference type="KEGG" id="mtv:RVBD_2358"/>
<dbReference type="TubercuList" id="Rv2358"/>
<dbReference type="eggNOG" id="COG0640">
    <property type="taxonomic scope" value="Bacteria"/>
</dbReference>
<dbReference type="InParanoid" id="P9WMI5"/>
<dbReference type="OrthoDB" id="3400172at2"/>
<dbReference type="PhylomeDB" id="P9WMI5"/>
<dbReference type="Proteomes" id="UP000001584">
    <property type="component" value="Chromosome"/>
</dbReference>
<dbReference type="GO" id="GO:0003677">
    <property type="term" value="F:DNA binding"/>
    <property type="evidence" value="ECO:0007669"/>
    <property type="project" value="UniProtKB-KW"/>
</dbReference>
<dbReference type="GO" id="GO:0003700">
    <property type="term" value="F:DNA-binding transcription factor activity"/>
    <property type="evidence" value="ECO:0007669"/>
    <property type="project" value="InterPro"/>
</dbReference>
<dbReference type="GO" id="GO:0046872">
    <property type="term" value="F:metal ion binding"/>
    <property type="evidence" value="ECO:0007669"/>
    <property type="project" value="UniProtKB-KW"/>
</dbReference>
<dbReference type="GO" id="GO:0006355">
    <property type="term" value="P:regulation of DNA-templated transcription"/>
    <property type="evidence" value="ECO:0000318"/>
    <property type="project" value="GO_Central"/>
</dbReference>
<dbReference type="GO" id="GO:0010043">
    <property type="term" value="P:response to zinc ion"/>
    <property type="evidence" value="ECO:0000316"/>
    <property type="project" value="MTBBASE"/>
</dbReference>
<dbReference type="CDD" id="cd00090">
    <property type="entry name" value="HTH_ARSR"/>
    <property type="match status" value="1"/>
</dbReference>
<dbReference type="FunFam" id="1.10.10.10:FF:000484">
    <property type="entry name" value="ArsR family transcriptional regulator"/>
    <property type="match status" value="1"/>
</dbReference>
<dbReference type="Gene3D" id="1.10.10.10">
    <property type="entry name" value="Winged helix-like DNA-binding domain superfamily/Winged helix DNA-binding domain"/>
    <property type="match status" value="1"/>
</dbReference>
<dbReference type="InterPro" id="IPR011991">
    <property type="entry name" value="ArsR-like_HTH"/>
</dbReference>
<dbReference type="InterPro" id="IPR001845">
    <property type="entry name" value="HTH_ArsR_DNA-bd_dom"/>
</dbReference>
<dbReference type="InterPro" id="IPR051011">
    <property type="entry name" value="Metal_resp_trans_reg"/>
</dbReference>
<dbReference type="InterPro" id="IPR036388">
    <property type="entry name" value="WH-like_DNA-bd_sf"/>
</dbReference>
<dbReference type="InterPro" id="IPR036390">
    <property type="entry name" value="WH_DNA-bd_sf"/>
</dbReference>
<dbReference type="NCBIfam" id="NF033788">
    <property type="entry name" value="HTH_metalloreg"/>
    <property type="match status" value="1"/>
</dbReference>
<dbReference type="PANTHER" id="PTHR43132">
    <property type="entry name" value="ARSENICAL RESISTANCE OPERON REPRESSOR ARSR-RELATED"/>
    <property type="match status" value="1"/>
</dbReference>
<dbReference type="PANTHER" id="PTHR43132:SF2">
    <property type="entry name" value="ARSENICAL RESISTANCE OPERON REPRESSOR ARSR-RELATED"/>
    <property type="match status" value="1"/>
</dbReference>
<dbReference type="Pfam" id="PF01022">
    <property type="entry name" value="HTH_5"/>
    <property type="match status" value="1"/>
</dbReference>
<dbReference type="PRINTS" id="PR00778">
    <property type="entry name" value="HTHARSR"/>
</dbReference>
<dbReference type="SMART" id="SM00418">
    <property type="entry name" value="HTH_ARSR"/>
    <property type="match status" value="1"/>
</dbReference>
<dbReference type="SUPFAM" id="SSF46785">
    <property type="entry name" value="Winged helix' DNA-binding domain"/>
    <property type="match status" value="1"/>
</dbReference>
<dbReference type="PROSITE" id="PS50987">
    <property type="entry name" value="HTH_ARSR_2"/>
    <property type="match status" value="1"/>
</dbReference>